<comment type="function">
    <text evidence="1">Catalyzes the ATP-dependent 2-thiolation of cytidine in position 32 of tRNA, to form 2-thiocytidine (s(2)C32). The sulfur atoms are provided by the cysteine/cysteine desulfurase (IscS) system.</text>
</comment>
<comment type="catalytic activity">
    <reaction evidence="1">
        <text>cytidine(32) in tRNA + S-sulfanyl-L-cysteinyl-[cysteine desulfurase] + AH2 + ATP = 2-thiocytidine(32) in tRNA + L-cysteinyl-[cysteine desulfurase] + A + AMP + diphosphate + H(+)</text>
        <dbReference type="Rhea" id="RHEA:57048"/>
        <dbReference type="Rhea" id="RHEA-COMP:10288"/>
        <dbReference type="Rhea" id="RHEA-COMP:12157"/>
        <dbReference type="Rhea" id="RHEA-COMP:12158"/>
        <dbReference type="Rhea" id="RHEA-COMP:14821"/>
        <dbReference type="ChEBI" id="CHEBI:13193"/>
        <dbReference type="ChEBI" id="CHEBI:15378"/>
        <dbReference type="ChEBI" id="CHEBI:17499"/>
        <dbReference type="ChEBI" id="CHEBI:29950"/>
        <dbReference type="ChEBI" id="CHEBI:30616"/>
        <dbReference type="ChEBI" id="CHEBI:33019"/>
        <dbReference type="ChEBI" id="CHEBI:61963"/>
        <dbReference type="ChEBI" id="CHEBI:82748"/>
        <dbReference type="ChEBI" id="CHEBI:141453"/>
        <dbReference type="ChEBI" id="CHEBI:456215"/>
    </reaction>
    <physiologicalReaction direction="left-to-right" evidence="1">
        <dbReference type="Rhea" id="RHEA:57049"/>
    </physiologicalReaction>
</comment>
<comment type="cofactor">
    <cofactor evidence="1">
        <name>Mg(2+)</name>
        <dbReference type="ChEBI" id="CHEBI:18420"/>
    </cofactor>
</comment>
<comment type="cofactor">
    <cofactor evidence="1">
        <name>[4Fe-4S] cluster</name>
        <dbReference type="ChEBI" id="CHEBI:49883"/>
    </cofactor>
    <text evidence="1">Binds 1 [4Fe-4S] cluster per subunit. The cluster is chelated by three Cys residues, the fourth Fe has a free coordination site that may bind a sulfur atom transferred from the persulfide of IscS.</text>
</comment>
<comment type="pathway">
    <text evidence="1">tRNA modification.</text>
</comment>
<comment type="subunit">
    <text evidence="1">Homodimer.</text>
</comment>
<comment type="subcellular location">
    <subcellularLocation>
        <location evidence="1">Cytoplasm</location>
    </subcellularLocation>
</comment>
<comment type="miscellaneous">
    <text evidence="1">The thiolation reaction likely consists of two steps: a first activation step by ATP to form an adenylated intermediate of the target base of tRNA, and a second nucleophilic substitution step of the sulfur (S) atom supplied by the hydrosulfide attached to the Fe-S cluster.</text>
</comment>
<comment type="similarity">
    <text evidence="1">Belongs to the TtcA family.</text>
</comment>
<proteinExistence type="inferred from homology"/>
<protein>
    <recommendedName>
        <fullName evidence="1">tRNA-cytidine(32) 2-sulfurtransferase</fullName>
        <ecNumber evidence="1">2.8.1.-</ecNumber>
    </recommendedName>
    <alternativeName>
        <fullName evidence="1">Two-thiocytidine biosynthesis protein A</fullName>
    </alternativeName>
    <alternativeName>
        <fullName evidence="1">tRNA 2-thiocytidine biosynthesis protein TtcA</fullName>
    </alternativeName>
</protein>
<accession>A4G9W3</accession>
<organism>
    <name type="scientific">Herminiimonas arsenicoxydans</name>
    <dbReference type="NCBI Taxonomy" id="204773"/>
    <lineage>
        <taxon>Bacteria</taxon>
        <taxon>Pseudomonadati</taxon>
        <taxon>Pseudomonadota</taxon>
        <taxon>Betaproteobacteria</taxon>
        <taxon>Burkholderiales</taxon>
        <taxon>Oxalobacteraceae</taxon>
        <taxon>Herminiimonas</taxon>
    </lineage>
</organism>
<evidence type="ECO:0000255" key="1">
    <source>
        <dbReference type="HAMAP-Rule" id="MF_01850"/>
    </source>
</evidence>
<reference key="1">
    <citation type="journal article" date="2007" name="PLoS Genet.">
        <title>A tale of two oxidation states: bacterial colonization of arsenic-rich environments.</title>
        <authorList>
            <person name="Muller D."/>
            <person name="Medigue C."/>
            <person name="Koechler S."/>
            <person name="Barbe V."/>
            <person name="Barakat M."/>
            <person name="Talla E."/>
            <person name="Bonnefoy V."/>
            <person name="Krin E."/>
            <person name="Arsene-Ploetze F."/>
            <person name="Carapito C."/>
            <person name="Chandler M."/>
            <person name="Cournoyer B."/>
            <person name="Cruveiller S."/>
            <person name="Dossat C."/>
            <person name="Duval S."/>
            <person name="Heymann M."/>
            <person name="Leize E."/>
            <person name="Lieutaud A."/>
            <person name="Lievremont D."/>
            <person name="Makita Y."/>
            <person name="Mangenot S."/>
            <person name="Nitschke W."/>
            <person name="Ortet P."/>
            <person name="Perdrial N."/>
            <person name="Schoepp B."/>
            <person name="Siguier P."/>
            <person name="Simeonova D.D."/>
            <person name="Rouy Z."/>
            <person name="Segurens B."/>
            <person name="Turlin E."/>
            <person name="Vallenet D."/>
            <person name="van Dorsselaer A."/>
            <person name="Weiss S."/>
            <person name="Weissenbach J."/>
            <person name="Lett M.-C."/>
            <person name="Danchin A."/>
            <person name="Bertin P.N."/>
        </authorList>
    </citation>
    <scope>NUCLEOTIDE SEQUENCE [LARGE SCALE GENOMIC DNA]</scope>
    <source>
        <strain>ULPAs1</strain>
    </source>
</reference>
<name>TTCA_HERAR</name>
<gene>
    <name evidence="1" type="primary">ttcA</name>
    <name type="ordered locus">HEAR3193</name>
</gene>
<sequence>MSQSVINEAAISAPAETAAALSFKQGEKIVYENNKLHKRLCRQVGQAIGDFNMIEDGDKIMVCLSGGKDSYALLDILMTLRERAPIKFDIVAVNLDQKQPNFPEHILPAYLKQLDIPFHIENQDTYSIVKRLIPEGKTTCSLCSRLRRGILYRVADELGATKIALGHHRDDIMETFFLNMFFGAKIKGMPPKLQSDDGKHIVIRPLAYVKEADTERYAQIKNFPIIPCDLCGSQENLQRKQIKNMLREWEKKHPGRVDNIFSSLSTVVPSHLMDSNLFGFADLQATGVAMPNGDIAFDEEPCSTGSTISSVIPLRTED</sequence>
<feature type="chain" id="PRO_0000348753" description="tRNA-cytidine(32) 2-sulfurtransferase">
    <location>
        <begin position="1"/>
        <end position="318"/>
    </location>
</feature>
<feature type="short sequence motif" description="PP-loop motif" evidence="1">
    <location>
        <begin position="65"/>
        <end position="70"/>
    </location>
</feature>
<feature type="binding site" evidence="1">
    <location>
        <position position="140"/>
    </location>
    <ligand>
        <name>[4Fe-4S] cluster</name>
        <dbReference type="ChEBI" id="CHEBI:49883"/>
    </ligand>
</feature>
<feature type="binding site" evidence="1">
    <location>
        <position position="143"/>
    </location>
    <ligand>
        <name>[4Fe-4S] cluster</name>
        <dbReference type="ChEBI" id="CHEBI:49883"/>
    </ligand>
</feature>
<feature type="binding site" evidence="1">
    <location>
        <position position="231"/>
    </location>
    <ligand>
        <name>[4Fe-4S] cluster</name>
        <dbReference type="ChEBI" id="CHEBI:49883"/>
    </ligand>
</feature>
<keyword id="KW-0004">4Fe-4S</keyword>
<keyword id="KW-0067">ATP-binding</keyword>
<keyword id="KW-0963">Cytoplasm</keyword>
<keyword id="KW-0408">Iron</keyword>
<keyword id="KW-0411">Iron-sulfur</keyword>
<keyword id="KW-0460">Magnesium</keyword>
<keyword id="KW-0479">Metal-binding</keyword>
<keyword id="KW-0547">Nucleotide-binding</keyword>
<keyword id="KW-1185">Reference proteome</keyword>
<keyword id="KW-0694">RNA-binding</keyword>
<keyword id="KW-0808">Transferase</keyword>
<keyword id="KW-0819">tRNA processing</keyword>
<keyword id="KW-0820">tRNA-binding</keyword>
<dbReference type="EC" id="2.8.1.-" evidence="1"/>
<dbReference type="EMBL" id="CU207211">
    <property type="protein sequence ID" value="CAL63300.1"/>
    <property type="molecule type" value="Genomic_DNA"/>
</dbReference>
<dbReference type="SMR" id="A4G9W3"/>
<dbReference type="STRING" id="204773.HEAR3193"/>
<dbReference type="KEGG" id="har:HEAR3193"/>
<dbReference type="eggNOG" id="COG0037">
    <property type="taxonomic scope" value="Bacteria"/>
</dbReference>
<dbReference type="HOGENOM" id="CLU_026481_0_0_4"/>
<dbReference type="OrthoDB" id="9801054at2"/>
<dbReference type="Proteomes" id="UP000006697">
    <property type="component" value="Chromosome"/>
</dbReference>
<dbReference type="GO" id="GO:0005737">
    <property type="term" value="C:cytoplasm"/>
    <property type="evidence" value="ECO:0007669"/>
    <property type="project" value="UniProtKB-SubCell"/>
</dbReference>
<dbReference type="GO" id="GO:0051539">
    <property type="term" value="F:4 iron, 4 sulfur cluster binding"/>
    <property type="evidence" value="ECO:0007669"/>
    <property type="project" value="UniProtKB-UniRule"/>
</dbReference>
<dbReference type="GO" id="GO:0005524">
    <property type="term" value="F:ATP binding"/>
    <property type="evidence" value="ECO:0007669"/>
    <property type="project" value="UniProtKB-UniRule"/>
</dbReference>
<dbReference type="GO" id="GO:0000287">
    <property type="term" value="F:magnesium ion binding"/>
    <property type="evidence" value="ECO:0007669"/>
    <property type="project" value="UniProtKB-UniRule"/>
</dbReference>
<dbReference type="GO" id="GO:0016783">
    <property type="term" value="F:sulfurtransferase activity"/>
    <property type="evidence" value="ECO:0007669"/>
    <property type="project" value="UniProtKB-UniRule"/>
</dbReference>
<dbReference type="GO" id="GO:0000049">
    <property type="term" value="F:tRNA binding"/>
    <property type="evidence" value="ECO:0007669"/>
    <property type="project" value="UniProtKB-KW"/>
</dbReference>
<dbReference type="GO" id="GO:0034227">
    <property type="term" value="P:tRNA thio-modification"/>
    <property type="evidence" value="ECO:0007669"/>
    <property type="project" value="UniProtKB-UniRule"/>
</dbReference>
<dbReference type="CDD" id="cd24138">
    <property type="entry name" value="TtcA-like"/>
    <property type="match status" value="1"/>
</dbReference>
<dbReference type="Gene3D" id="3.40.50.620">
    <property type="entry name" value="HUPs"/>
    <property type="match status" value="1"/>
</dbReference>
<dbReference type="HAMAP" id="MF_01850">
    <property type="entry name" value="TtcA"/>
    <property type="match status" value="1"/>
</dbReference>
<dbReference type="InterPro" id="IPR014729">
    <property type="entry name" value="Rossmann-like_a/b/a_fold"/>
</dbReference>
<dbReference type="InterPro" id="IPR011063">
    <property type="entry name" value="TilS/TtcA_N"/>
</dbReference>
<dbReference type="InterPro" id="IPR012089">
    <property type="entry name" value="tRNA_Cyd_32_2_STrfase"/>
</dbReference>
<dbReference type="InterPro" id="IPR035107">
    <property type="entry name" value="tRNA_thiolation_TtcA_Ctu1"/>
</dbReference>
<dbReference type="NCBIfam" id="NF007972">
    <property type="entry name" value="PRK10696.1"/>
    <property type="match status" value="1"/>
</dbReference>
<dbReference type="PANTHER" id="PTHR43686:SF1">
    <property type="entry name" value="AMINOTRAN_5 DOMAIN-CONTAINING PROTEIN"/>
    <property type="match status" value="1"/>
</dbReference>
<dbReference type="PANTHER" id="PTHR43686">
    <property type="entry name" value="SULFURTRANSFERASE-RELATED"/>
    <property type="match status" value="1"/>
</dbReference>
<dbReference type="Pfam" id="PF01171">
    <property type="entry name" value="ATP_bind_3"/>
    <property type="match status" value="1"/>
</dbReference>
<dbReference type="PIRSF" id="PIRSF004976">
    <property type="entry name" value="ATPase_YdaO"/>
    <property type="match status" value="1"/>
</dbReference>
<dbReference type="SUPFAM" id="SSF52402">
    <property type="entry name" value="Adenine nucleotide alpha hydrolases-like"/>
    <property type="match status" value="1"/>
</dbReference>